<dbReference type="EC" id="3.1.1.31"/>
<dbReference type="EMBL" id="U14553">
    <property type="protein sequence ID" value="AAA50355.1"/>
    <property type="molecule type" value="Genomic_DNA"/>
</dbReference>
<dbReference type="EMBL" id="BA000019">
    <property type="protein sequence ID" value="BAB77968.1"/>
    <property type="molecule type" value="Genomic_DNA"/>
</dbReference>
<dbReference type="PIR" id="AD2006">
    <property type="entry name" value="AD2006"/>
</dbReference>
<dbReference type="RefSeq" id="WP_010995771.1">
    <property type="nucleotide sequence ID" value="NZ_RSCN01000041.1"/>
</dbReference>
<dbReference type="SMR" id="P46016"/>
<dbReference type="STRING" id="103690.gene:10493618"/>
<dbReference type="KEGG" id="ana:alr1602"/>
<dbReference type="eggNOG" id="COG0363">
    <property type="taxonomic scope" value="Bacteria"/>
</dbReference>
<dbReference type="OrthoDB" id="9810967at2"/>
<dbReference type="UniPathway" id="UPA00115">
    <property type="reaction ID" value="UER00409"/>
</dbReference>
<dbReference type="Proteomes" id="UP000002483">
    <property type="component" value="Chromosome"/>
</dbReference>
<dbReference type="GO" id="GO:0017057">
    <property type="term" value="F:6-phosphogluconolactonase activity"/>
    <property type="evidence" value="ECO:0007669"/>
    <property type="project" value="UniProtKB-EC"/>
</dbReference>
<dbReference type="GO" id="GO:0005975">
    <property type="term" value="P:carbohydrate metabolic process"/>
    <property type="evidence" value="ECO:0007669"/>
    <property type="project" value="InterPro"/>
</dbReference>
<dbReference type="GO" id="GO:0043158">
    <property type="term" value="P:heterocyst development"/>
    <property type="evidence" value="ECO:0007669"/>
    <property type="project" value="UniProtKB-KW"/>
</dbReference>
<dbReference type="GO" id="GO:0006098">
    <property type="term" value="P:pentose-phosphate shunt"/>
    <property type="evidence" value="ECO:0007669"/>
    <property type="project" value="UniProtKB-UniPathway"/>
</dbReference>
<dbReference type="CDD" id="cd01400">
    <property type="entry name" value="6PGL"/>
    <property type="match status" value="1"/>
</dbReference>
<dbReference type="Gene3D" id="3.40.50.1360">
    <property type="match status" value="1"/>
</dbReference>
<dbReference type="InterPro" id="IPR005900">
    <property type="entry name" value="6-phosphogluconolactonase_DevB"/>
</dbReference>
<dbReference type="InterPro" id="IPR006148">
    <property type="entry name" value="Glc/Gal-6P_isomerase"/>
</dbReference>
<dbReference type="InterPro" id="IPR037171">
    <property type="entry name" value="NagB/RpiA_transferase-like"/>
</dbReference>
<dbReference type="InterPro" id="IPR039104">
    <property type="entry name" value="PGLS"/>
</dbReference>
<dbReference type="NCBIfam" id="TIGR01198">
    <property type="entry name" value="pgl"/>
    <property type="match status" value="1"/>
</dbReference>
<dbReference type="PANTHER" id="PTHR11054">
    <property type="entry name" value="6-PHOSPHOGLUCONOLACTONASE"/>
    <property type="match status" value="1"/>
</dbReference>
<dbReference type="PANTHER" id="PTHR11054:SF0">
    <property type="entry name" value="6-PHOSPHOGLUCONOLACTONASE"/>
    <property type="match status" value="1"/>
</dbReference>
<dbReference type="Pfam" id="PF01182">
    <property type="entry name" value="Glucosamine_iso"/>
    <property type="match status" value="1"/>
</dbReference>
<dbReference type="SUPFAM" id="SSF100950">
    <property type="entry name" value="NagB/RpiA/CoA transferase-like"/>
    <property type="match status" value="1"/>
</dbReference>
<proteinExistence type="evidence at transcript level"/>
<sequence>MKKTVEVLPDQTALIARSLDLILTKLDTAIKQQGRFTIALSGGSTPKPLYEAIAAQKLPWDKIHVFWGDERYVSPDHPDSNELMARTAWLDRVDIPAENIHAVPTLDNNPAVSAAKYEQHLQTFFNSAPGEFPALDVVLLGMGDDAHTASLFPHTEALQVRDRLITVGNKDGNPRITFTYPFINAASSVIFVVAGANKRPALAQVFAPSADDLAYPSRFIQPQGELLWLLDAAAGAELSV</sequence>
<reference key="1">
    <citation type="submission" date="1994-09" db="EMBL/GenBank/DDBJ databases">
        <title>Bacterial subtracted cDNA libraries containing genes involved in the differentiation of vegetative cells to heterocysts allow a new twist on an old method of isolating developmental genes.</title>
        <authorList>
            <person name="Bauer C.C."/>
            <person name="Scappino L."/>
            <person name="Haselkorn R."/>
        </authorList>
    </citation>
    <scope>NUCLEOTIDE SEQUENCE [GENOMIC DNA]</scope>
</reference>
<reference key="2">
    <citation type="journal article" date="2001" name="DNA Res.">
        <title>Complete genomic sequence of the filamentous nitrogen-fixing cyanobacterium Anabaena sp. strain PCC 7120.</title>
        <authorList>
            <person name="Kaneko T."/>
            <person name="Nakamura Y."/>
            <person name="Wolk C.P."/>
            <person name="Kuritz T."/>
            <person name="Sasamoto S."/>
            <person name="Watanabe A."/>
            <person name="Iriguchi M."/>
            <person name="Ishikawa A."/>
            <person name="Kawashima K."/>
            <person name="Kimura T."/>
            <person name="Kishida Y."/>
            <person name="Kohara M."/>
            <person name="Matsumoto M."/>
            <person name="Matsuno A."/>
            <person name="Muraki A."/>
            <person name="Nakazaki N."/>
            <person name="Shimpo S."/>
            <person name="Sugimoto M."/>
            <person name="Takazawa M."/>
            <person name="Yamada M."/>
            <person name="Yasuda M."/>
            <person name="Tabata S."/>
        </authorList>
    </citation>
    <scope>NUCLEOTIDE SEQUENCE [LARGE SCALE GENOMIC DNA]</scope>
    <source>
        <strain>PCC 7120 / SAG 25.82 / UTEX 2576</strain>
    </source>
</reference>
<comment type="function">
    <text>Hydrolysis of 6-phosphogluconolactone to 6-phosphogluconate.</text>
</comment>
<comment type="catalytic activity">
    <reaction>
        <text>6-phospho-D-glucono-1,5-lactone + H2O = 6-phospho-D-gluconate + H(+)</text>
        <dbReference type="Rhea" id="RHEA:12556"/>
        <dbReference type="ChEBI" id="CHEBI:15377"/>
        <dbReference type="ChEBI" id="CHEBI:15378"/>
        <dbReference type="ChEBI" id="CHEBI:57955"/>
        <dbReference type="ChEBI" id="CHEBI:58759"/>
        <dbReference type="EC" id="3.1.1.31"/>
    </reaction>
</comment>
<comment type="pathway">
    <text>Carbohydrate degradation; pentose phosphate pathway; D-ribulose 5-phosphate from D-glucose 6-phosphate (oxidative stage): step 2/3.</text>
</comment>
<comment type="developmental stage">
    <text>Developmentally regulated gene in heterocyst development.</text>
</comment>
<comment type="similarity">
    <text evidence="1">Belongs to the glucosamine/galactosamine-6-phosphate isomerase family. 6-phosphogluconolactonase subfamily.</text>
</comment>
<keyword id="KW-0364">Heterocyst</keyword>
<keyword id="KW-0378">Hydrolase</keyword>
<keyword id="KW-1185">Reference proteome</keyword>
<gene>
    <name type="primary">pgl</name>
    <name type="synonym">devB</name>
    <name type="ordered locus">alr1602</name>
</gene>
<name>6PGL_NOSS1</name>
<feature type="chain" id="PRO_0000090087" description="6-phosphogluconolactonase">
    <location>
        <begin position="1"/>
        <end position="240"/>
    </location>
</feature>
<feature type="sequence conflict" description="In Ref. 1; AAA50355." evidence="1" ref="1">
    <original>ALIA</original>
    <variation>RSI</variation>
    <location>
        <begin position="13"/>
        <end position="16"/>
    </location>
</feature>
<feature type="sequence conflict" description="In Ref. 1; AAA50355." evidence="1" ref="1">
    <original>N</original>
    <variation>D</variation>
    <location>
        <position position="99"/>
    </location>
</feature>
<feature type="sequence conflict" description="In Ref. 1; AAA50355." evidence="1" ref="1">
    <original>GAE</original>
    <variation>RRT</variation>
    <location>
        <begin position="235"/>
        <end position="237"/>
    </location>
</feature>
<evidence type="ECO:0000305" key="1"/>
<protein>
    <recommendedName>
        <fullName>6-phosphogluconolactonase</fullName>
        <shortName>6PGL</shortName>
        <ecNumber>3.1.1.31</ecNumber>
    </recommendedName>
</protein>
<accession>P46016</accession>
<organism>
    <name type="scientific">Nostoc sp. (strain PCC 7120 / SAG 25.82 / UTEX 2576)</name>
    <dbReference type="NCBI Taxonomy" id="103690"/>
    <lineage>
        <taxon>Bacteria</taxon>
        <taxon>Bacillati</taxon>
        <taxon>Cyanobacteriota</taxon>
        <taxon>Cyanophyceae</taxon>
        <taxon>Nostocales</taxon>
        <taxon>Nostocaceae</taxon>
        <taxon>Nostoc</taxon>
    </lineage>
</organism>